<organism>
    <name type="scientific">Escherichia coli O9:H4 (strain HS)</name>
    <dbReference type="NCBI Taxonomy" id="331112"/>
    <lineage>
        <taxon>Bacteria</taxon>
        <taxon>Pseudomonadati</taxon>
        <taxon>Pseudomonadota</taxon>
        <taxon>Gammaproteobacteria</taxon>
        <taxon>Enterobacterales</taxon>
        <taxon>Enterobacteriaceae</taxon>
        <taxon>Escherichia</taxon>
    </lineage>
</organism>
<proteinExistence type="inferred from homology"/>
<reference key="1">
    <citation type="journal article" date="2008" name="J. Bacteriol.">
        <title>The pangenome structure of Escherichia coli: comparative genomic analysis of E. coli commensal and pathogenic isolates.</title>
        <authorList>
            <person name="Rasko D.A."/>
            <person name="Rosovitz M.J."/>
            <person name="Myers G.S.A."/>
            <person name="Mongodin E.F."/>
            <person name="Fricke W.F."/>
            <person name="Gajer P."/>
            <person name="Crabtree J."/>
            <person name="Sebaihia M."/>
            <person name="Thomson N.R."/>
            <person name="Chaudhuri R."/>
            <person name="Henderson I.R."/>
            <person name="Sperandio V."/>
            <person name="Ravel J."/>
        </authorList>
    </citation>
    <scope>NUCLEOTIDE SEQUENCE [LARGE SCALE GENOMIC DNA]</scope>
    <source>
        <strain>HS</strain>
    </source>
</reference>
<gene>
    <name evidence="1" type="primary">groEL</name>
    <name evidence="1" type="synonym">groL</name>
    <name type="ordered locus">EcHS_A4384</name>
</gene>
<comment type="function">
    <text evidence="1">Together with its co-chaperonin GroES, plays an essential role in assisting protein folding. The GroEL-GroES system forms a nano-cage that allows encapsulation of the non-native substrate proteins and provides a physical environment optimized to promote and accelerate protein folding.</text>
</comment>
<comment type="catalytic activity">
    <reaction evidence="1">
        <text>ATP + H2O + a folded polypeptide = ADP + phosphate + an unfolded polypeptide.</text>
        <dbReference type="EC" id="5.6.1.7"/>
    </reaction>
</comment>
<comment type="subunit">
    <text evidence="1">Forms a cylinder of 14 subunits composed of two heptameric rings stacked back-to-back. Interacts with the co-chaperonin GroES.</text>
</comment>
<comment type="subcellular location">
    <subcellularLocation>
        <location evidence="1">Cytoplasm</location>
    </subcellularLocation>
</comment>
<comment type="similarity">
    <text evidence="1">Belongs to the chaperonin (HSP60) family.</text>
</comment>
<sequence length="548" mass="57329">MAAKDVKFGNDARVKMLRGVNVLADAVKVTLGPKGRNVVLDKSFGAPTITKDGVSVAREIELEDKFENMGAQMVKEVASKANDAAGDGTTTATVLAQAIITEGLKAVAAGMNPMDLKRGIDKAVTAAVEELKALSVPCSDSKAIAQVGTISANSDETVGKLIAEAMDKVGKEGVITVEDGTGLQDELDVVEGMQFDRGYLSPYFINKPETGAVELESPFILLADKKISNIREMLPVLEAVAKAGKPLLIIAEDVEGEALATLVVNTMRGIVKVAAVKAPGFGDRRKAMLQDIATLTGGTVISEEIGMELEKATLEDLGQAKRVVINKDTTTIIDGVGEEAAIQGRVAQIRQQIEEATSDYDREKLQERVAKLAGGVAVIKVGAATEVEMKEKKARVEDALHATRAAVEEGVVAGGGVALIRVASKLADLRGQNEDQNVGIKVALRAMEAPLRQIVLNCGEEPSVVANTVKGGDGNYGYNAATEEYGNMIDMGILDPTKVTRSALQYAASVAGLMITTECMVTDLPKNDAADLGAAGGMGGMGGMGGMM</sequence>
<name>CH60_ECOHS</name>
<feature type="chain" id="PRO_1000061255" description="Chaperonin GroEL">
    <location>
        <begin position="1"/>
        <end position="548"/>
    </location>
</feature>
<feature type="binding site" evidence="1">
    <location>
        <begin position="30"/>
        <end position="33"/>
    </location>
    <ligand>
        <name>ATP</name>
        <dbReference type="ChEBI" id="CHEBI:30616"/>
    </ligand>
</feature>
<feature type="binding site" evidence="1">
    <location>
        <position position="51"/>
    </location>
    <ligand>
        <name>ATP</name>
        <dbReference type="ChEBI" id="CHEBI:30616"/>
    </ligand>
</feature>
<feature type="binding site" evidence="1">
    <location>
        <begin position="87"/>
        <end position="91"/>
    </location>
    <ligand>
        <name>ATP</name>
        <dbReference type="ChEBI" id="CHEBI:30616"/>
    </ligand>
</feature>
<feature type="binding site" evidence="1">
    <location>
        <position position="415"/>
    </location>
    <ligand>
        <name>ATP</name>
        <dbReference type="ChEBI" id="CHEBI:30616"/>
    </ligand>
</feature>
<feature type="binding site" evidence="1">
    <location>
        <begin position="479"/>
        <end position="481"/>
    </location>
    <ligand>
        <name>ATP</name>
        <dbReference type="ChEBI" id="CHEBI:30616"/>
    </ligand>
</feature>
<feature type="binding site" evidence="1">
    <location>
        <position position="495"/>
    </location>
    <ligand>
        <name>ATP</name>
        <dbReference type="ChEBI" id="CHEBI:30616"/>
    </ligand>
</feature>
<accession>A8A7N9</accession>
<protein>
    <recommendedName>
        <fullName evidence="1">Chaperonin GroEL</fullName>
        <ecNumber evidence="1">5.6.1.7</ecNumber>
    </recommendedName>
    <alternativeName>
        <fullName evidence="1">60 kDa chaperonin</fullName>
    </alternativeName>
    <alternativeName>
        <fullName evidence="1">Chaperonin-60</fullName>
        <shortName evidence="1">Cpn60</shortName>
    </alternativeName>
</protein>
<keyword id="KW-0067">ATP-binding</keyword>
<keyword id="KW-0143">Chaperone</keyword>
<keyword id="KW-0963">Cytoplasm</keyword>
<keyword id="KW-0413">Isomerase</keyword>
<keyword id="KW-0547">Nucleotide-binding</keyword>
<evidence type="ECO:0000255" key="1">
    <source>
        <dbReference type="HAMAP-Rule" id="MF_00600"/>
    </source>
</evidence>
<dbReference type="EC" id="5.6.1.7" evidence="1"/>
<dbReference type="EMBL" id="CP000802">
    <property type="protein sequence ID" value="ABV08543.1"/>
    <property type="molecule type" value="Genomic_DNA"/>
</dbReference>
<dbReference type="RefSeq" id="WP_000729117.1">
    <property type="nucleotide sequence ID" value="NC_009800.1"/>
</dbReference>
<dbReference type="BMRB" id="A8A7N9"/>
<dbReference type="SMR" id="A8A7N9"/>
<dbReference type="GeneID" id="93777681"/>
<dbReference type="KEGG" id="ecx:EcHS_A4384"/>
<dbReference type="HOGENOM" id="CLU_016503_3_0_6"/>
<dbReference type="GO" id="GO:0005737">
    <property type="term" value="C:cytoplasm"/>
    <property type="evidence" value="ECO:0007669"/>
    <property type="project" value="UniProtKB-SubCell"/>
</dbReference>
<dbReference type="GO" id="GO:0005524">
    <property type="term" value="F:ATP binding"/>
    <property type="evidence" value="ECO:0007669"/>
    <property type="project" value="UniProtKB-UniRule"/>
</dbReference>
<dbReference type="GO" id="GO:0140662">
    <property type="term" value="F:ATP-dependent protein folding chaperone"/>
    <property type="evidence" value="ECO:0007669"/>
    <property type="project" value="InterPro"/>
</dbReference>
<dbReference type="GO" id="GO:0016853">
    <property type="term" value="F:isomerase activity"/>
    <property type="evidence" value="ECO:0007669"/>
    <property type="project" value="UniProtKB-KW"/>
</dbReference>
<dbReference type="GO" id="GO:0051082">
    <property type="term" value="F:unfolded protein binding"/>
    <property type="evidence" value="ECO:0007669"/>
    <property type="project" value="UniProtKB-UniRule"/>
</dbReference>
<dbReference type="GO" id="GO:0042026">
    <property type="term" value="P:protein refolding"/>
    <property type="evidence" value="ECO:0007669"/>
    <property type="project" value="UniProtKB-UniRule"/>
</dbReference>
<dbReference type="CDD" id="cd03344">
    <property type="entry name" value="GroEL"/>
    <property type="match status" value="1"/>
</dbReference>
<dbReference type="FunFam" id="1.10.560.10:FF:000001">
    <property type="entry name" value="60 kDa chaperonin"/>
    <property type="match status" value="1"/>
</dbReference>
<dbReference type="FunFam" id="3.50.7.10:FF:000001">
    <property type="entry name" value="60 kDa chaperonin"/>
    <property type="match status" value="1"/>
</dbReference>
<dbReference type="Gene3D" id="3.50.7.10">
    <property type="entry name" value="GroEL"/>
    <property type="match status" value="1"/>
</dbReference>
<dbReference type="Gene3D" id="1.10.560.10">
    <property type="entry name" value="GroEL-like equatorial domain"/>
    <property type="match status" value="1"/>
</dbReference>
<dbReference type="Gene3D" id="3.30.260.10">
    <property type="entry name" value="TCP-1-like chaperonin intermediate domain"/>
    <property type="match status" value="1"/>
</dbReference>
<dbReference type="HAMAP" id="MF_00600">
    <property type="entry name" value="CH60"/>
    <property type="match status" value="1"/>
</dbReference>
<dbReference type="InterPro" id="IPR018370">
    <property type="entry name" value="Chaperonin_Cpn60_CS"/>
</dbReference>
<dbReference type="InterPro" id="IPR001844">
    <property type="entry name" value="Cpn60/GroEL"/>
</dbReference>
<dbReference type="InterPro" id="IPR002423">
    <property type="entry name" value="Cpn60/GroEL/TCP-1"/>
</dbReference>
<dbReference type="InterPro" id="IPR027409">
    <property type="entry name" value="GroEL-like_apical_dom_sf"/>
</dbReference>
<dbReference type="InterPro" id="IPR027413">
    <property type="entry name" value="GROEL-like_equatorial_sf"/>
</dbReference>
<dbReference type="InterPro" id="IPR027410">
    <property type="entry name" value="TCP-1-like_intermed_sf"/>
</dbReference>
<dbReference type="NCBIfam" id="TIGR02348">
    <property type="entry name" value="GroEL"/>
    <property type="match status" value="1"/>
</dbReference>
<dbReference type="NCBIfam" id="NF000592">
    <property type="entry name" value="PRK00013.1"/>
    <property type="match status" value="1"/>
</dbReference>
<dbReference type="NCBIfam" id="NF009487">
    <property type="entry name" value="PRK12849.1"/>
    <property type="match status" value="1"/>
</dbReference>
<dbReference type="NCBIfam" id="NF009488">
    <property type="entry name" value="PRK12850.1"/>
    <property type="match status" value="1"/>
</dbReference>
<dbReference type="NCBIfam" id="NF009489">
    <property type="entry name" value="PRK12851.1"/>
    <property type="match status" value="1"/>
</dbReference>
<dbReference type="PANTHER" id="PTHR45633">
    <property type="entry name" value="60 KDA HEAT SHOCK PROTEIN, MITOCHONDRIAL"/>
    <property type="match status" value="1"/>
</dbReference>
<dbReference type="Pfam" id="PF00118">
    <property type="entry name" value="Cpn60_TCP1"/>
    <property type="match status" value="1"/>
</dbReference>
<dbReference type="PRINTS" id="PR00298">
    <property type="entry name" value="CHAPERONIN60"/>
</dbReference>
<dbReference type="SUPFAM" id="SSF52029">
    <property type="entry name" value="GroEL apical domain-like"/>
    <property type="match status" value="1"/>
</dbReference>
<dbReference type="SUPFAM" id="SSF48592">
    <property type="entry name" value="GroEL equatorial domain-like"/>
    <property type="match status" value="1"/>
</dbReference>
<dbReference type="SUPFAM" id="SSF54849">
    <property type="entry name" value="GroEL-intermediate domain like"/>
    <property type="match status" value="1"/>
</dbReference>
<dbReference type="PROSITE" id="PS00296">
    <property type="entry name" value="CHAPERONINS_CPN60"/>
    <property type="match status" value="1"/>
</dbReference>